<organism>
    <name type="scientific">Escherichia coli O6:H1 (strain CFT073 / ATCC 700928 / UPEC)</name>
    <dbReference type="NCBI Taxonomy" id="199310"/>
    <lineage>
        <taxon>Bacteria</taxon>
        <taxon>Pseudomonadati</taxon>
        <taxon>Pseudomonadota</taxon>
        <taxon>Gammaproteobacteria</taxon>
        <taxon>Enterobacterales</taxon>
        <taxon>Enterobacteriaceae</taxon>
        <taxon>Escherichia</taxon>
    </lineage>
</organism>
<feature type="chain" id="PRO_0000077649" description="P21 prophage-derived head-stabilizing protein">
    <location>
        <begin position="1"/>
        <end position="68"/>
    </location>
</feature>
<protein>
    <recommendedName>
        <fullName>P21 prophage-derived head-stabilizing protein</fullName>
    </recommendedName>
    <alternativeName>
        <fullName>Head protein gp3</fullName>
    </alternativeName>
</protein>
<dbReference type="EMBL" id="AE014075">
    <property type="protein sequence ID" value="AAN80039.1"/>
    <property type="molecule type" value="Genomic_DNA"/>
</dbReference>
<dbReference type="RefSeq" id="WP_000258997.1">
    <property type="nucleotide sequence ID" value="NZ_CP051263.1"/>
</dbReference>
<dbReference type="SMR" id="P68655"/>
<dbReference type="STRING" id="199310.c1570"/>
<dbReference type="KEGG" id="ecc:c1570"/>
<dbReference type="eggNOG" id="ENOG5031KUQ">
    <property type="taxonomic scope" value="Bacteria"/>
</dbReference>
<dbReference type="HOGENOM" id="CLU_197606_1_0_6"/>
<dbReference type="BioCyc" id="ECOL199310:C1570-MONOMER"/>
<dbReference type="Proteomes" id="UP000001410">
    <property type="component" value="Chromosome"/>
</dbReference>
<dbReference type="GO" id="GO:0019058">
    <property type="term" value="P:viral life cycle"/>
    <property type="evidence" value="ECO:0007669"/>
    <property type="project" value="InterPro"/>
</dbReference>
<dbReference type="Gene3D" id="3.30.1580.10">
    <property type="entry name" value="Head-to-tail joining protein W"/>
    <property type="match status" value="1"/>
</dbReference>
<dbReference type="InterPro" id="IPR004174">
    <property type="entry name" value="GpW"/>
</dbReference>
<dbReference type="InterPro" id="IPR036626">
    <property type="entry name" value="GpW_sf"/>
</dbReference>
<dbReference type="NCBIfam" id="NF047331">
    <property type="entry name" value="phage_HTJ"/>
    <property type="match status" value="1"/>
</dbReference>
<dbReference type="Pfam" id="PF02831">
    <property type="entry name" value="gpW"/>
    <property type="match status" value="1"/>
</dbReference>
<dbReference type="SUPFAM" id="SSF64210">
    <property type="entry name" value="Head-to-tail joining protein W, gpW"/>
    <property type="match status" value="1"/>
</dbReference>
<accession>P68655</accession>
<accession>P36271</accession>
<keyword id="KW-1185">Reference proteome</keyword>
<reference key="1">
    <citation type="journal article" date="2002" name="Proc. Natl. Acad. Sci. U.S.A.">
        <title>Extensive mosaic structure revealed by the complete genome sequence of uropathogenic Escherichia coli.</title>
        <authorList>
            <person name="Welch R.A."/>
            <person name="Burland V."/>
            <person name="Plunkett G. III"/>
            <person name="Redford P."/>
            <person name="Roesch P."/>
            <person name="Rasko D."/>
            <person name="Buckles E.L."/>
            <person name="Liou S.-R."/>
            <person name="Boutin A."/>
            <person name="Hackett J."/>
            <person name="Stroud D."/>
            <person name="Mayhew G.F."/>
            <person name="Rose D.J."/>
            <person name="Zhou S."/>
            <person name="Schwartz D.C."/>
            <person name="Perna N.T."/>
            <person name="Mobley H.L.T."/>
            <person name="Donnenberg M.S."/>
            <person name="Blattner F.R."/>
        </authorList>
    </citation>
    <scope>NUCLEOTIDE SEQUENCE [LARGE SCALE GENOMIC DNA]</scope>
    <source>
        <strain>CFT073 / ATCC 700928 / UPEC</strain>
    </source>
</reference>
<evidence type="ECO:0000305" key="1"/>
<proteinExistence type="inferred from homology"/>
<comment type="similarity">
    <text evidence="1">Belongs to the lambda phage gpW family.</text>
</comment>
<name>VG03_ECOL6</name>
<gene>
    <name type="ordered locus">c1570</name>
</gene>
<sequence length="68" mass="7621">MVTVAELQALRQARLDLLTGKRVVSVQKDGRRIEYTAASLDELNRAINDAESVLGTTRCRRRPLGVRL</sequence>